<accession>Q03JI6</accession>
<name>CAS9B_STRTD</name>
<feature type="chain" id="PRO_0000421686" description="CRISPR-associated endonuclease Cas9 2">
    <location>
        <begin position="1"/>
        <end position="1388"/>
    </location>
</feature>
<feature type="domain" description="HNH Cas9-type" evidence="2">
    <location>
        <begin position="771"/>
        <end position="928"/>
    </location>
</feature>
<feature type="region of interest" description="Disordered" evidence="3">
    <location>
        <begin position="1100"/>
        <end position="1130"/>
    </location>
</feature>
<feature type="region of interest" description="PAM-interacting domain (PI)">
    <location>
        <begin position="1102"/>
        <end position="1388"/>
    </location>
</feature>
<feature type="compositionally biased region" description="Basic and acidic residues" evidence="3">
    <location>
        <begin position="1100"/>
        <end position="1109"/>
    </location>
</feature>
<feature type="compositionally biased region" description="Polar residues" evidence="3">
    <location>
        <begin position="1116"/>
        <end position="1129"/>
    </location>
</feature>
<feature type="active site" description="For RuvC-like nuclease domain" evidence="1">
    <location>
        <position position="10"/>
    </location>
</feature>
<feature type="active site" description="Proton acceptor for HNH nuclease domain" evidence="1">
    <location>
        <position position="847"/>
    </location>
</feature>
<feature type="binding site" evidence="1">
    <location>
        <position position="10"/>
    </location>
    <ligand>
        <name>Mg(2+)</name>
        <dbReference type="ChEBI" id="CHEBI:18420"/>
        <label>1</label>
    </ligand>
</feature>
<feature type="binding site" evidence="1">
    <location>
        <position position="10"/>
    </location>
    <ligand>
        <name>Mg(2+)</name>
        <dbReference type="ChEBI" id="CHEBI:18420"/>
        <label>2</label>
    </ligand>
</feature>
<feature type="binding site" evidence="1">
    <location>
        <position position="763"/>
    </location>
    <ligand>
        <name>Mg(2+)</name>
        <dbReference type="ChEBI" id="CHEBI:18420"/>
        <label>1</label>
    </ligand>
</feature>
<feature type="binding site" evidence="1">
    <location>
        <position position="767"/>
    </location>
    <ligand>
        <name>Mg(2+)</name>
        <dbReference type="ChEBI" id="CHEBI:18420"/>
        <label>1</label>
    </ligand>
</feature>
<feature type="binding site" evidence="1">
    <location>
        <position position="767"/>
    </location>
    <ligand>
        <name>Mg(2+)</name>
        <dbReference type="ChEBI" id="CHEBI:18420"/>
        <label>2</label>
    </ligand>
</feature>
<feature type="binding site" evidence="1">
    <location>
        <position position="990"/>
    </location>
    <ligand>
        <name>Mg(2+)</name>
        <dbReference type="ChEBI" id="CHEBI:18420"/>
        <label>2</label>
    </ligand>
</feature>
<reference key="1">
    <citation type="journal article" date="2006" name="Proc. Natl. Acad. Sci. U.S.A.">
        <title>Comparative genomics of the lactic acid bacteria.</title>
        <authorList>
            <person name="Makarova K.S."/>
            <person name="Slesarev A."/>
            <person name="Wolf Y.I."/>
            <person name="Sorokin A."/>
            <person name="Mirkin B."/>
            <person name="Koonin E.V."/>
            <person name="Pavlov A."/>
            <person name="Pavlova N."/>
            <person name="Karamychev V."/>
            <person name="Polouchine N."/>
            <person name="Shakhova V."/>
            <person name="Grigoriev I."/>
            <person name="Lou Y."/>
            <person name="Rohksar D."/>
            <person name="Lucas S."/>
            <person name="Huang K."/>
            <person name="Goodstein D.M."/>
            <person name="Hawkins T."/>
            <person name="Plengvidhya V."/>
            <person name="Welker D."/>
            <person name="Hughes J."/>
            <person name="Goh Y."/>
            <person name="Benson A."/>
            <person name="Baldwin K."/>
            <person name="Lee J.-H."/>
            <person name="Diaz-Muniz I."/>
            <person name="Dosti B."/>
            <person name="Smeianov V."/>
            <person name="Wechter W."/>
            <person name="Barabote R."/>
            <person name="Lorca G."/>
            <person name="Altermann E."/>
            <person name="Barrangou R."/>
            <person name="Ganesan B."/>
            <person name="Xie Y."/>
            <person name="Rawsthorne H."/>
            <person name="Tamir D."/>
            <person name="Parker C."/>
            <person name="Breidt F."/>
            <person name="Broadbent J.R."/>
            <person name="Hutkins R."/>
            <person name="O'Sullivan D."/>
            <person name="Steele J."/>
            <person name="Unlu G."/>
            <person name="Saier M.H. Jr."/>
            <person name="Klaenhammer T."/>
            <person name="Richardson P."/>
            <person name="Kozyavkin S."/>
            <person name="Weimer B.C."/>
            <person name="Mills D.A."/>
        </authorList>
    </citation>
    <scope>NUCLEOTIDE SEQUENCE [LARGE SCALE GENOMIC DNA]</scope>
    <source>
        <strain>ATCC BAA-491 / LMD-9</strain>
    </source>
</reference>
<reference key="2">
    <citation type="journal article" date="2012" name="Science">
        <title>A programmable dual-RNA-guided DNA endonuclease in adaptive bacterial immunity.</title>
        <authorList>
            <person name="Jinek M."/>
            <person name="Chylinski K."/>
            <person name="Fonfara I."/>
            <person name="Hauer M."/>
            <person name="Doudna J.A."/>
            <person name="Charpentier E."/>
        </authorList>
    </citation>
    <scope>FUNCTION AS AN DNA ENDONUCLEASE</scope>
    <scope>SUBUNIT</scope>
    <scope>RNA-BINDING</scope>
    <source>
        <strain>ATCC BAA-491 / LMD-9</strain>
    </source>
</reference>
<reference key="3">
    <citation type="journal article" date="2013" name="Science">
        <title>Multiplex genome engineering using CRISPR/Cas systems.</title>
        <authorList>
            <person name="Cong L."/>
            <person name="Ran F.A."/>
            <person name="Cox D."/>
            <person name="Lin S."/>
            <person name="Barretto R."/>
            <person name="Habib N."/>
            <person name="Hsu P.D."/>
            <person name="Wu X."/>
            <person name="Jiang W."/>
            <person name="Marraffini L.A."/>
            <person name="Zhang F."/>
        </authorList>
    </citation>
    <scope>BIOTECHNOLOGY</scope>
    <source>
        <strain>ATCC BAA-491 / LMD-9</strain>
    </source>
</reference>
<reference key="4">
    <citation type="journal article" date="2014" name="Nucleic Acids Res.">
        <title>Phylogeny of Cas9 determines functional exchangeability of dual-RNA and Cas9 among orthologous type II CRISPR-Cas systems.</title>
        <authorList>
            <person name="Fonfara I."/>
            <person name="Le Rhun A."/>
            <person name="Chylinski K."/>
            <person name="Makarova K.S."/>
            <person name="Lecrivain A.L."/>
            <person name="Bzdrenga J."/>
            <person name="Koonin E.V."/>
            <person name="Charpentier E."/>
        </authorList>
    </citation>
    <scope>FUNCTION AS AN ENDONUCLEASE</scope>
    <scope>FUNCTION IN GUIDE RNA PROCESSING</scope>
    <source>
        <strain>ATCC BAA-491 / LMD-9</strain>
    </source>
</reference>
<reference key="5">
    <citation type="journal article" date="2014" name="Science">
        <title>Structures of Cas9 endonucleases reveal RNA-mediated conformational activation.</title>
        <authorList>
            <person name="Jinek M."/>
            <person name="Jiang F."/>
            <person name="Taylor D.W."/>
            <person name="Sternberg S.H."/>
            <person name="Kaya E."/>
            <person name="Ma E."/>
            <person name="Anders C."/>
            <person name="Hauer M."/>
            <person name="Zhou K."/>
            <person name="Lin S."/>
            <person name="Kaplan M."/>
            <person name="Iavarone A.T."/>
            <person name="Charpentier E."/>
            <person name="Nogales E."/>
            <person name="Doudna J.A."/>
        </authorList>
    </citation>
    <scope>FUNCTION</scope>
    <scope>DOMAIN</scope>
</reference>
<reference key="6">
    <citation type="journal article" date="2023" name="Nat. Commun.">
        <title>Assessing and advancing the safety of CRISPR-Cas tools: from DNA to RNA editing.</title>
        <authorList>
            <person name="Tao J."/>
            <person name="Bauer D.E."/>
            <person name="Chiarle R."/>
        </authorList>
    </citation>
    <scope>REVIEW ON SAFETY OF GENOME EDITING TOOLS</scope>
</reference>
<gene>
    <name evidence="1" type="primary">cas9-2</name>
    <name type="synonym">csn1</name>
    <name type="ordered locus">STER_1477</name>
</gene>
<sequence length="1388" mass="161031">MTKPYSIGLDIGTNSVGWAVTTDNYKVPSKKMKVLGNTSKKYIKKNLLGVLLFDSGITAEGRRLKRTARRRYTRRRNRILYLQEIFSTEMATLDDAFFQRLDDSFLVPDDKRDSKYPIFGNLVEEKAYHDEFPTIYHLRKYLADSTKKADLRLVYLALAHMIKYRGHFLIEGEFNSKNNDIQKNFQDFLDTYNAIFESDLSLENSKQLEEIVKDKISKLEKKDRILKLFPGEKNSGIFSEFLKLIVGNQADFRKCFNLDEKASLHFSKESYDEDLETLLGYIGDDYSDVFLKAKKLYDAILLSGFLTVTDNETEAPLSSAMIKRYNEHKEDLALLKEYIRNISLKTYNEVFKDDTKNGYAGYIDGKTNQEDFYVYLKKLLAEFEGADYFLEKIDREDFLRKQRTFDNGSIPYQIHLQEMRAILDKQAKFYPFLAKNKERIEKILTFRIPYYVGPLARGNSDFAWSIRKRNEKITPWNFEDVIDKESSAEAFINRMTSFDLYLPEEKVLPKHSLLYETFNVYNELTKVRFIAESMRDYQFLDSKQKKDIVRLYFKDKRKVTDKDIIEYLHAIYGYDGIELKGIEKQFNSSLSTYHDLLNIINDKEFLDDSSNEAIIEEIIHTLTIFEDREMIKQRLSKFENIFDKSVLKKLSRRHYTGWGKLSAKLINGIRDEKSGNTILDYLIDDGISNRNFMQLIHDDALSFKKKIQKAQIIGDEDKGNIKEVVKSLPGSPAIKKGILQSIKIVDELVKVMGGRKPESIVVEMARENQYTNQGKSNSQQRLKRLEKSLKELGSKILKENIPAKLSKIDNNALQNDRLYLYYLQNGKDMYTGDDLDIDRLSNYDIDHIIPQAFLKDNSIDNKVLVSSASNRGKSDDVPSLEVVKKRKTFWYQLLKSKLISQRKFDNLTKAERGGLSPEDKAGFIQRQLVETRQITKHVARLLDEKFNNKKDENNRAVRTVKIITLKSTLVSQFRKDFELYKVREINDFHHAHDAYLNAVVASALLKKYPKLEPEFVYGDYPKYNSFRERKSATEKVYFYSNIMNIFKKSISLADGRVIERPLIEVNEETGESVWNKESDLATVRRVLSYPQVNVVKKVEEQNHGLDRGKPKGLFNANLSSKPKPNSNENLVGAKEYLDPKKYGGYAGISNSFTVLVKGTIEKGAKKKITNVLEFQGISILDRINYRKDKLNFLLEKGYKDIELIIELPKYSLFELSDGSRRMLASILSTNNKRGEIHKGNQIFLSQKFVKLLYHAKRISNTINENHRKYVENHKKEFEELFYYILEFNENYVGAKKNGKLLNSAFQSWQNHSIDELCSSFIGPTGSERKGLFELTSRGSAADFEFLGVKIPRYRDYTPSSLLKDATLIHQSVTGLYETRIDLAKLGEG</sequence>
<comment type="function">
    <text evidence="1 4 6 7">CRISPR (clustered regularly interspaced short palindromic repeat) is an adaptive immune system that provides protection against mobile genetic elements (viruses, transposable elements and conjugative plasmids). CRISPR clusters contain spacers, sequences complementary to antecedent mobile elements, and target invading nucleic acids. CRISPR clusters are transcribed and processed into CRISPR RNA (crRNA). In type II CRISPR systems correct processing of pre-crRNA requires a trans-encoded small RNA (tracrRNA), endogenous ribonuclease 3 (rnc) and this protein (By similarity). The tracrRNA serves as a guide for ribonuclease 3-aided processing of pre-crRNA. Subsequently Cas9/crRNA/tracrRNA endonucleolytically cleaves linear or circular dsDNA target complementary to the spacer yielding blunt ends; Cas9 is inactive in the absence of the 2 guide RNAs (gRNA). Cas9 recognizes a 3'-G-rich protospacer adjacent motif (PAM, GGG in this organism) in the CRISPR repeat sequences to help distinguish self versus nonself, as targets within the bacterial CRISPR locus do not have PAMs. PAM recognition is also required for catalytic activity. Complements the gRNA coprocessing defect in a cas9 deletion in S.pyogenes strain 370, and cuts target DNA in Cas9:gRNAs mixing experiments with S.mutans strain UA159.</text>
</comment>
<comment type="cofactor">
    <cofactor evidence="8">
        <name>Mg(2+)</name>
        <dbReference type="ChEBI" id="CHEBI:18420"/>
    </cofactor>
    <text evidence="8">Endonuclease activity on target dsDNA requires Mg(2+).</text>
</comment>
<comment type="subunit">
    <text evidence="1 4">Monomer (By similarity). Binds crRNA and tracrRNA.</text>
</comment>
<comment type="domain">
    <text evidence="1">Has 2 endonuclease domains. The discontinuous RuvC-like domain cleaves the target DNA noncomplementary to crRNA while the HNH nuclease domain cleaves the target DNA complementary to crRNA.</text>
</comment>
<comment type="domain">
    <text evidence="7">The PAM-interacting domain (PI domain, approximately residues 1102-1388) recognizes the PAM motif; swapping the PI domain of this enzyme with that from S.pyogenes Cas9 (AC Q99ZW2) prevents cleavage of DNA with the endogenous PAM site but confers the ability to cleave DNA with the PAM site specific for S.pyogenes CRISPRs.</text>
</comment>
<comment type="biotechnology">
    <text evidence="5">Coexpression of Cas9 and both gRNAs in human cells has shown it is possible to use this system to target and modify a DNA sequence of interest in situ.</text>
</comment>
<comment type="similarity">
    <text evidence="1 8">Belongs to the CRISPR-associated protein Cas9 family. Subtype II-A subfamily.</text>
</comment>
<keyword id="KW-0051">Antiviral defense</keyword>
<keyword id="KW-0238">DNA-binding</keyword>
<keyword id="KW-0255">Endonuclease</keyword>
<keyword id="KW-0378">Hydrolase</keyword>
<keyword id="KW-0460">Magnesium</keyword>
<keyword id="KW-0464">Manganese</keyword>
<keyword id="KW-0479">Metal-binding</keyword>
<keyword id="KW-0540">Nuclease</keyword>
<keyword id="KW-0694">RNA-binding</keyword>
<organism>
    <name type="scientific">Streptococcus thermophilus (strain ATCC BAA-491 / LMD-9)</name>
    <dbReference type="NCBI Taxonomy" id="322159"/>
    <lineage>
        <taxon>Bacteria</taxon>
        <taxon>Bacillati</taxon>
        <taxon>Bacillota</taxon>
        <taxon>Bacilli</taxon>
        <taxon>Lactobacillales</taxon>
        <taxon>Streptococcaceae</taxon>
        <taxon>Streptococcus</taxon>
    </lineage>
</organism>
<dbReference type="EC" id="3.1.-.-" evidence="1"/>
<dbReference type="EMBL" id="CP000419">
    <property type="protein sequence ID" value="ABJ66636.1"/>
    <property type="molecule type" value="Genomic_DNA"/>
</dbReference>
<dbReference type="RefSeq" id="WP_011681470.1">
    <property type="nucleotide sequence ID" value="NC_008532.1"/>
</dbReference>
<dbReference type="SMR" id="Q03JI6"/>
<dbReference type="KEGG" id="ste:STER_1477"/>
<dbReference type="HOGENOM" id="CLU_005604_0_0_9"/>
<dbReference type="GO" id="GO:0003677">
    <property type="term" value="F:DNA binding"/>
    <property type="evidence" value="ECO:0007669"/>
    <property type="project" value="UniProtKB-KW"/>
</dbReference>
<dbReference type="GO" id="GO:0004519">
    <property type="term" value="F:endonuclease activity"/>
    <property type="evidence" value="ECO:0007669"/>
    <property type="project" value="UniProtKB-UniRule"/>
</dbReference>
<dbReference type="GO" id="GO:0046872">
    <property type="term" value="F:metal ion binding"/>
    <property type="evidence" value="ECO:0007669"/>
    <property type="project" value="UniProtKB-UniRule"/>
</dbReference>
<dbReference type="GO" id="GO:0003723">
    <property type="term" value="F:RNA binding"/>
    <property type="evidence" value="ECO:0007669"/>
    <property type="project" value="UniProtKB-KW"/>
</dbReference>
<dbReference type="GO" id="GO:0051607">
    <property type="term" value="P:defense response to virus"/>
    <property type="evidence" value="ECO:0007669"/>
    <property type="project" value="UniProtKB-UniRule"/>
</dbReference>
<dbReference type="GO" id="GO:0043571">
    <property type="term" value="P:maintenance of CRISPR repeat elements"/>
    <property type="evidence" value="ECO:0007669"/>
    <property type="project" value="UniProtKB-UniRule"/>
</dbReference>
<dbReference type="CDD" id="cd09643">
    <property type="entry name" value="Csn1"/>
    <property type="match status" value="1"/>
</dbReference>
<dbReference type="Gene3D" id="1.10.30.50">
    <property type="match status" value="1"/>
</dbReference>
<dbReference type="Gene3D" id="3.30.420.10">
    <property type="entry name" value="Ribonuclease H-like superfamily/Ribonuclease H"/>
    <property type="match status" value="1"/>
</dbReference>
<dbReference type="HAMAP" id="MF_01480">
    <property type="entry name" value="Cas9"/>
    <property type="match status" value="1"/>
</dbReference>
<dbReference type="InterPro" id="IPR028629">
    <property type="entry name" value="Cas9"/>
</dbReference>
<dbReference type="InterPro" id="IPR032239">
    <property type="entry name" value="Cas9-BH"/>
</dbReference>
<dbReference type="InterPro" id="IPR032237">
    <property type="entry name" value="Cas9_PI"/>
</dbReference>
<dbReference type="InterPro" id="IPR032240">
    <property type="entry name" value="Cas9_REC"/>
</dbReference>
<dbReference type="InterPro" id="IPR055228">
    <property type="entry name" value="Cas9_RuvC"/>
</dbReference>
<dbReference type="InterPro" id="IPR033114">
    <property type="entry name" value="HNH_CAS9"/>
</dbReference>
<dbReference type="InterPro" id="IPR003615">
    <property type="entry name" value="HNH_nuc"/>
</dbReference>
<dbReference type="InterPro" id="IPR036397">
    <property type="entry name" value="RNaseH_sf"/>
</dbReference>
<dbReference type="NCBIfam" id="TIGR01865">
    <property type="entry name" value="cas_Csn1"/>
    <property type="match status" value="1"/>
</dbReference>
<dbReference type="Pfam" id="PF16593">
    <property type="entry name" value="Cas9-BH"/>
    <property type="match status" value="1"/>
</dbReference>
<dbReference type="Pfam" id="PF16595">
    <property type="entry name" value="Cas9_PI"/>
    <property type="match status" value="1"/>
</dbReference>
<dbReference type="Pfam" id="PF16592">
    <property type="entry name" value="Cas9_REC"/>
    <property type="match status" value="1"/>
</dbReference>
<dbReference type="Pfam" id="PF22702">
    <property type="entry name" value="Cas9_RuvC"/>
    <property type="match status" value="1"/>
</dbReference>
<dbReference type="Pfam" id="PF13395">
    <property type="entry name" value="HNH_4"/>
    <property type="match status" value="1"/>
</dbReference>
<dbReference type="PROSITE" id="PS51749">
    <property type="entry name" value="HNH_CAS9"/>
    <property type="match status" value="1"/>
</dbReference>
<evidence type="ECO:0000255" key="1">
    <source>
        <dbReference type="HAMAP-Rule" id="MF_01480"/>
    </source>
</evidence>
<evidence type="ECO:0000255" key="2">
    <source>
        <dbReference type="PROSITE-ProRule" id="PRU01085"/>
    </source>
</evidence>
<evidence type="ECO:0000256" key="3">
    <source>
        <dbReference type="SAM" id="MobiDB-lite"/>
    </source>
</evidence>
<evidence type="ECO:0000269" key="4">
    <source>
    </source>
</evidence>
<evidence type="ECO:0000269" key="5">
    <source>
    </source>
</evidence>
<evidence type="ECO:0000269" key="6">
    <source>
    </source>
</evidence>
<evidence type="ECO:0000269" key="7">
    <source>
    </source>
</evidence>
<evidence type="ECO:0000305" key="8"/>
<protein>
    <recommendedName>
        <fullName evidence="1">CRISPR-associated endonuclease Cas9 2</fullName>
        <ecNumber evidence="1">3.1.-.-</ecNumber>
    </recommendedName>
    <alternativeName>
        <fullName>Cas9*</fullName>
    </alternativeName>
    <alternativeName>
        <fullName>St3Cas9</fullName>
    </alternativeName>
</protein>
<proteinExistence type="evidence at protein level"/>